<proteinExistence type="inferred from homology"/>
<comment type="similarity">
    <text evidence="1">Belongs to the universal ribosomal protein uS9 family.</text>
</comment>
<gene>
    <name evidence="1" type="primary">rpsI</name>
    <name type="ordered locus">Clim_0423</name>
</gene>
<sequence>MKEVIDTVGRRKTSVARVFMTPGKGRVIINKLPVEEYFKDEVRRSKALRPLALTERTEEFDIKVNVQGGGITGQSGAVSLGIARALTEFDETVRPILKTEKLLTRDPRMVERKKFGRKKARKRFQFSKR</sequence>
<reference key="1">
    <citation type="submission" date="2008-05" db="EMBL/GenBank/DDBJ databases">
        <title>Complete sequence of Chlorobium limicola DSM 245.</title>
        <authorList>
            <consortium name="US DOE Joint Genome Institute"/>
            <person name="Lucas S."/>
            <person name="Copeland A."/>
            <person name="Lapidus A."/>
            <person name="Glavina del Rio T."/>
            <person name="Dalin E."/>
            <person name="Tice H."/>
            <person name="Bruce D."/>
            <person name="Goodwin L."/>
            <person name="Pitluck S."/>
            <person name="Schmutz J."/>
            <person name="Larimer F."/>
            <person name="Land M."/>
            <person name="Hauser L."/>
            <person name="Kyrpides N."/>
            <person name="Ovchinnikova G."/>
            <person name="Zhao F."/>
            <person name="Li T."/>
            <person name="Liu Z."/>
            <person name="Overmann J."/>
            <person name="Bryant D.A."/>
            <person name="Richardson P."/>
        </authorList>
    </citation>
    <scope>NUCLEOTIDE SEQUENCE [LARGE SCALE GENOMIC DNA]</scope>
    <source>
        <strain>DSM 245 / NBRC 103803 / 6330</strain>
    </source>
</reference>
<protein>
    <recommendedName>
        <fullName evidence="1">Small ribosomal subunit protein uS9</fullName>
    </recommendedName>
    <alternativeName>
        <fullName evidence="2">30S ribosomal protein S9</fullName>
    </alternativeName>
</protein>
<accession>B3EFY3</accession>
<name>RS9_CHLL2</name>
<dbReference type="EMBL" id="CP001097">
    <property type="protein sequence ID" value="ACD89516.1"/>
    <property type="molecule type" value="Genomic_DNA"/>
</dbReference>
<dbReference type="RefSeq" id="WP_012465397.1">
    <property type="nucleotide sequence ID" value="NC_010803.1"/>
</dbReference>
<dbReference type="SMR" id="B3EFY3"/>
<dbReference type="STRING" id="290315.Clim_0423"/>
<dbReference type="KEGG" id="cli:Clim_0423"/>
<dbReference type="eggNOG" id="COG0103">
    <property type="taxonomic scope" value="Bacteria"/>
</dbReference>
<dbReference type="HOGENOM" id="CLU_046483_2_1_10"/>
<dbReference type="OrthoDB" id="9803965at2"/>
<dbReference type="Proteomes" id="UP000008841">
    <property type="component" value="Chromosome"/>
</dbReference>
<dbReference type="GO" id="GO:0005737">
    <property type="term" value="C:cytoplasm"/>
    <property type="evidence" value="ECO:0007669"/>
    <property type="project" value="UniProtKB-ARBA"/>
</dbReference>
<dbReference type="GO" id="GO:0015935">
    <property type="term" value="C:small ribosomal subunit"/>
    <property type="evidence" value="ECO:0007669"/>
    <property type="project" value="TreeGrafter"/>
</dbReference>
<dbReference type="GO" id="GO:0003723">
    <property type="term" value="F:RNA binding"/>
    <property type="evidence" value="ECO:0007669"/>
    <property type="project" value="TreeGrafter"/>
</dbReference>
<dbReference type="GO" id="GO:0003735">
    <property type="term" value="F:structural constituent of ribosome"/>
    <property type="evidence" value="ECO:0007669"/>
    <property type="project" value="InterPro"/>
</dbReference>
<dbReference type="GO" id="GO:0006412">
    <property type="term" value="P:translation"/>
    <property type="evidence" value="ECO:0007669"/>
    <property type="project" value="UniProtKB-UniRule"/>
</dbReference>
<dbReference type="FunFam" id="3.30.230.10:FF:000001">
    <property type="entry name" value="30S ribosomal protein S9"/>
    <property type="match status" value="1"/>
</dbReference>
<dbReference type="Gene3D" id="3.30.230.10">
    <property type="match status" value="1"/>
</dbReference>
<dbReference type="HAMAP" id="MF_00532_B">
    <property type="entry name" value="Ribosomal_uS9_B"/>
    <property type="match status" value="1"/>
</dbReference>
<dbReference type="InterPro" id="IPR020568">
    <property type="entry name" value="Ribosomal_Su5_D2-typ_SF"/>
</dbReference>
<dbReference type="InterPro" id="IPR000754">
    <property type="entry name" value="Ribosomal_uS9"/>
</dbReference>
<dbReference type="InterPro" id="IPR023035">
    <property type="entry name" value="Ribosomal_uS9_bac/plastid"/>
</dbReference>
<dbReference type="InterPro" id="IPR020574">
    <property type="entry name" value="Ribosomal_uS9_CS"/>
</dbReference>
<dbReference type="InterPro" id="IPR014721">
    <property type="entry name" value="Ribsml_uS5_D2-typ_fold_subgr"/>
</dbReference>
<dbReference type="NCBIfam" id="NF001099">
    <property type="entry name" value="PRK00132.1"/>
    <property type="match status" value="1"/>
</dbReference>
<dbReference type="PANTHER" id="PTHR21569">
    <property type="entry name" value="RIBOSOMAL PROTEIN S9"/>
    <property type="match status" value="1"/>
</dbReference>
<dbReference type="PANTHER" id="PTHR21569:SF1">
    <property type="entry name" value="SMALL RIBOSOMAL SUBUNIT PROTEIN US9M"/>
    <property type="match status" value="1"/>
</dbReference>
<dbReference type="Pfam" id="PF00380">
    <property type="entry name" value="Ribosomal_S9"/>
    <property type="match status" value="1"/>
</dbReference>
<dbReference type="SUPFAM" id="SSF54211">
    <property type="entry name" value="Ribosomal protein S5 domain 2-like"/>
    <property type="match status" value="1"/>
</dbReference>
<dbReference type="PROSITE" id="PS00360">
    <property type="entry name" value="RIBOSOMAL_S9"/>
    <property type="match status" value="1"/>
</dbReference>
<keyword id="KW-0687">Ribonucleoprotein</keyword>
<keyword id="KW-0689">Ribosomal protein</keyword>
<evidence type="ECO:0000255" key="1">
    <source>
        <dbReference type="HAMAP-Rule" id="MF_00532"/>
    </source>
</evidence>
<evidence type="ECO:0000305" key="2"/>
<feature type="chain" id="PRO_1000128100" description="Small ribosomal subunit protein uS9">
    <location>
        <begin position="1"/>
        <end position="129"/>
    </location>
</feature>
<organism>
    <name type="scientific">Chlorobium limicola (strain DSM 245 / NBRC 103803 / 6330)</name>
    <dbReference type="NCBI Taxonomy" id="290315"/>
    <lineage>
        <taxon>Bacteria</taxon>
        <taxon>Pseudomonadati</taxon>
        <taxon>Chlorobiota</taxon>
        <taxon>Chlorobiia</taxon>
        <taxon>Chlorobiales</taxon>
        <taxon>Chlorobiaceae</taxon>
        <taxon>Chlorobium/Pelodictyon group</taxon>
        <taxon>Chlorobium</taxon>
    </lineage>
</organism>